<feature type="chain" id="PRO_1000198650" description="Pyrimidine/purine nucleoside phosphorylase">
    <location>
        <begin position="1"/>
        <end position="106"/>
    </location>
</feature>
<comment type="function">
    <text evidence="1">Catalyzes the phosphorolysis of diverse nucleosides, yielding D-ribose 1-phosphate and the respective free bases. Can use uridine, adenosine, guanosine, cytidine, thymidine, inosine and xanthosine as substrates. Also catalyzes the reverse reactions.</text>
</comment>
<comment type="catalytic activity">
    <reaction evidence="1">
        <text>a purine D-ribonucleoside + phosphate = a purine nucleobase + alpha-D-ribose 1-phosphate</text>
        <dbReference type="Rhea" id="RHEA:19805"/>
        <dbReference type="ChEBI" id="CHEBI:26386"/>
        <dbReference type="ChEBI" id="CHEBI:43474"/>
        <dbReference type="ChEBI" id="CHEBI:57720"/>
        <dbReference type="ChEBI" id="CHEBI:142355"/>
        <dbReference type="EC" id="2.4.2.1"/>
    </reaction>
</comment>
<comment type="catalytic activity">
    <reaction evidence="1">
        <text>adenosine + phosphate = alpha-D-ribose 1-phosphate + adenine</text>
        <dbReference type="Rhea" id="RHEA:27642"/>
        <dbReference type="ChEBI" id="CHEBI:16335"/>
        <dbReference type="ChEBI" id="CHEBI:16708"/>
        <dbReference type="ChEBI" id="CHEBI:43474"/>
        <dbReference type="ChEBI" id="CHEBI:57720"/>
        <dbReference type="EC" id="2.4.2.1"/>
    </reaction>
</comment>
<comment type="catalytic activity">
    <reaction evidence="1">
        <text>cytidine + phosphate = cytosine + alpha-D-ribose 1-phosphate</text>
        <dbReference type="Rhea" id="RHEA:52540"/>
        <dbReference type="ChEBI" id="CHEBI:16040"/>
        <dbReference type="ChEBI" id="CHEBI:17562"/>
        <dbReference type="ChEBI" id="CHEBI:43474"/>
        <dbReference type="ChEBI" id="CHEBI:57720"/>
        <dbReference type="EC" id="2.4.2.2"/>
    </reaction>
</comment>
<comment type="catalytic activity">
    <reaction evidence="1">
        <text>guanosine + phosphate = alpha-D-ribose 1-phosphate + guanine</text>
        <dbReference type="Rhea" id="RHEA:13233"/>
        <dbReference type="ChEBI" id="CHEBI:16235"/>
        <dbReference type="ChEBI" id="CHEBI:16750"/>
        <dbReference type="ChEBI" id="CHEBI:43474"/>
        <dbReference type="ChEBI" id="CHEBI:57720"/>
        <dbReference type="EC" id="2.4.2.1"/>
    </reaction>
</comment>
<comment type="catalytic activity">
    <reaction evidence="1">
        <text>inosine + phosphate = alpha-D-ribose 1-phosphate + hypoxanthine</text>
        <dbReference type="Rhea" id="RHEA:27646"/>
        <dbReference type="ChEBI" id="CHEBI:17368"/>
        <dbReference type="ChEBI" id="CHEBI:17596"/>
        <dbReference type="ChEBI" id="CHEBI:43474"/>
        <dbReference type="ChEBI" id="CHEBI:57720"/>
        <dbReference type="EC" id="2.4.2.1"/>
    </reaction>
</comment>
<comment type="catalytic activity">
    <reaction evidence="1">
        <text>thymidine + phosphate = 2-deoxy-alpha-D-ribose 1-phosphate + thymine</text>
        <dbReference type="Rhea" id="RHEA:16037"/>
        <dbReference type="ChEBI" id="CHEBI:17748"/>
        <dbReference type="ChEBI" id="CHEBI:17821"/>
        <dbReference type="ChEBI" id="CHEBI:43474"/>
        <dbReference type="ChEBI" id="CHEBI:57259"/>
        <dbReference type="EC" id="2.4.2.2"/>
    </reaction>
</comment>
<comment type="catalytic activity">
    <reaction evidence="1">
        <text>uridine + phosphate = alpha-D-ribose 1-phosphate + uracil</text>
        <dbReference type="Rhea" id="RHEA:24388"/>
        <dbReference type="ChEBI" id="CHEBI:16704"/>
        <dbReference type="ChEBI" id="CHEBI:17568"/>
        <dbReference type="ChEBI" id="CHEBI:43474"/>
        <dbReference type="ChEBI" id="CHEBI:57720"/>
        <dbReference type="EC" id="2.4.2.2"/>
    </reaction>
</comment>
<comment type="catalytic activity">
    <reaction evidence="1">
        <text>xanthosine + phosphate = alpha-D-ribose 1-phosphate + xanthine</text>
        <dbReference type="Rhea" id="RHEA:27638"/>
        <dbReference type="ChEBI" id="CHEBI:17712"/>
        <dbReference type="ChEBI" id="CHEBI:18107"/>
        <dbReference type="ChEBI" id="CHEBI:43474"/>
        <dbReference type="ChEBI" id="CHEBI:57720"/>
        <dbReference type="EC" id="2.4.2.1"/>
    </reaction>
</comment>
<comment type="similarity">
    <text evidence="1">Belongs to the nucleoside phosphorylase PpnP family.</text>
</comment>
<keyword id="KW-0328">Glycosyltransferase</keyword>
<keyword id="KW-0808">Transferase</keyword>
<organism>
    <name type="scientific">Burkholderia cenocepacia (strain ATCC BAA-245 / DSM 16553 / LMG 16656 / NCTC 13227 / J2315 / CF5610)</name>
    <name type="common">Burkholderia cepacia (strain J2315)</name>
    <dbReference type="NCBI Taxonomy" id="216591"/>
    <lineage>
        <taxon>Bacteria</taxon>
        <taxon>Pseudomonadati</taxon>
        <taxon>Pseudomonadota</taxon>
        <taxon>Betaproteobacteria</taxon>
        <taxon>Burkholderiales</taxon>
        <taxon>Burkholderiaceae</taxon>
        <taxon>Burkholderia</taxon>
        <taxon>Burkholderia cepacia complex</taxon>
    </lineage>
</organism>
<sequence>MTSATQFDNVSVVKRANVYFDGKCVSHTVLFPDGTRKTLGVILPCALNFGTDAPELMEVQAGKCRVKLDGSSEWQTYGAGESFSVPGKSRFDIEVLETLDYVCSYL</sequence>
<protein>
    <recommendedName>
        <fullName evidence="1">Pyrimidine/purine nucleoside phosphorylase</fullName>
        <ecNumber evidence="1">2.4.2.1</ecNumber>
        <ecNumber evidence="1">2.4.2.2</ecNumber>
    </recommendedName>
    <alternativeName>
        <fullName evidence="1">Adenosine phosphorylase</fullName>
    </alternativeName>
    <alternativeName>
        <fullName evidence="1">Cytidine phosphorylase</fullName>
    </alternativeName>
    <alternativeName>
        <fullName evidence="1">Guanosine phosphorylase</fullName>
    </alternativeName>
    <alternativeName>
        <fullName evidence="1">Inosine phosphorylase</fullName>
    </alternativeName>
    <alternativeName>
        <fullName evidence="1">Thymidine phosphorylase</fullName>
    </alternativeName>
    <alternativeName>
        <fullName evidence="1">Uridine phosphorylase</fullName>
    </alternativeName>
    <alternativeName>
        <fullName evidence="1">Xanthosine phosphorylase</fullName>
    </alternativeName>
</protein>
<accession>B4ELA5</accession>
<name>PPNP_BURCJ</name>
<proteinExistence type="inferred from homology"/>
<evidence type="ECO:0000255" key="1">
    <source>
        <dbReference type="HAMAP-Rule" id="MF_01537"/>
    </source>
</evidence>
<gene>
    <name evidence="1" type="primary">ppnP</name>
    <name type="ordered locus">BceJ2315_51760</name>
    <name type="ORF">BCAM1727</name>
</gene>
<reference key="1">
    <citation type="journal article" date="2009" name="J. Bacteriol.">
        <title>The genome of Burkholderia cenocepacia J2315, an epidemic pathogen of cystic fibrosis patients.</title>
        <authorList>
            <person name="Holden M.T."/>
            <person name="Seth-Smith H.M."/>
            <person name="Crossman L.C."/>
            <person name="Sebaihia M."/>
            <person name="Bentley S.D."/>
            <person name="Cerdeno-Tarraga A.M."/>
            <person name="Thomson N.R."/>
            <person name="Bason N."/>
            <person name="Quail M.A."/>
            <person name="Sharp S."/>
            <person name="Cherevach I."/>
            <person name="Churcher C."/>
            <person name="Goodhead I."/>
            <person name="Hauser H."/>
            <person name="Holroyd N."/>
            <person name="Mungall K."/>
            <person name="Scott P."/>
            <person name="Walker D."/>
            <person name="White B."/>
            <person name="Rose H."/>
            <person name="Iversen P."/>
            <person name="Mil-Homens D."/>
            <person name="Rocha E.P."/>
            <person name="Fialho A.M."/>
            <person name="Baldwin A."/>
            <person name="Dowson C."/>
            <person name="Barrell B.G."/>
            <person name="Govan J.R."/>
            <person name="Vandamme P."/>
            <person name="Hart C.A."/>
            <person name="Mahenthiralingam E."/>
            <person name="Parkhill J."/>
        </authorList>
    </citation>
    <scope>NUCLEOTIDE SEQUENCE [LARGE SCALE GENOMIC DNA]</scope>
    <source>
        <strain>ATCC BAA-245 / DSM 16553 / LMG 16656 / NCTC 13227 / J2315 / CF5610</strain>
    </source>
</reference>
<dbReference type="EC" id="2.4.2.1" evidence="1"/>
<dbReference type="EC" id="2.4.2.2" evidence="1"/>
<dbReference type="EMBL" id="AM747721">
    <property type="protein sequence ID" value="CAR55584.1"/>
    <property type="molecule type" value="Genomic_DNA"/>
</dbReference>
<dbReference type="RefSeq" id="WP_006478890.1">
    <property type="nucleotide sequence ID" value="NC_011001.1"/>
</dbReference>
<dbReference type="SMR" id="B4ELA5"/>
<dbReference type="KEGG" id="bcj:BCAM1727"/>
<dbReference type="eggNOG" id="COG3123">
    <property type="taxonomic scope" value="Bacteria"/>
</dbReference>
<dbReference type="HOGENOM" id="CLU_157874_1_0_4"/>
<dbReference type="BioCyc" id="BCEN216591:G1G1V-5761-MONOMER"/>
<dbReference type="Proteomes" id="UP000001035">
    <property type="component" value="Chromosome 2"/>
</dbReference>
<dbReference type="GO" id="GO:0005829">
    <property type="term" value="C:cytosol"/>
    <property type="evidence" value="ECO:0007669"/>
    <property type="project" value="TreeGrafter"/>
</dbReference>
<dbReference type="GO" id="GO:0047975">
    <property type="term" value="F:guanosine phosphorylase activity"/>
    <property type="evidence" value="ECO:0007669"/>
    <property type="project" value="UniProtKB-EC"/>
</dbReference>
<dbReference type="GO" id="GO:0004731">
    <property type="term" value="F:purine-nucleoside phosphorylase activity"/>
    <property type="evidence" value="ECO:0007669"/>
    <property type="project" value="UniProtKB-UniRule"/>
</dbReference>
<dbReference type="GO" id="GO:0009032">
    <property type="term" value="F:thymidine phosphorylase activity"/>
    <property type="evidence" value="ECO:0007669"/>
    <property type="project" value="UniProtKB-EC"/>
</dbReference>
<dbReference type="GO" id="GO:0004850">
    <property type="term" value="F:uridine phosphorylase activity"/>
    <property type="evidence" value="ECO:0007669"/>
    <property type="project" value="UniProtKB-EC"/>
</dbReference>
<dbReference type="CDD" id="cd20296">
    <property type="entry name" value="cupin_PpnP-like"/>
    <property type="match status" value="1"/>
</dbReference>
<dbReference type="Gene3D" id="2.60.120.10">
    <property type="entry name" value="Jelly Rolls"/>
    <property type="match status" value="1"/>
</dbReference>
<dbReference type="HAMAP" id="MF_01537">
    <property type="entry name" value="Nucleos_phosphorylase_PpnP"/>
    <property type="match status" value="1"/>
</dbReference>
<dbReference type="InterPro" id="IPR009664">
    <property type="entry name" value="Ppnp"/>
</dbReference>
<dbReference type="InterPro" id="IPR014710">
    <property type="entry name" value="RmlC-like_jellyroll"/>
</dbReference>
<dbReference type="InterPro" id="IPR011051">
    <property type="entry name" value="RmlC_Cupin_sf"/>
</dbReference>
<dbReference type="PANTHER" id="PTHR36540">
    <property type="entry name" value="PYRIMIDINE/PURINE NUCLEOSIDE PHOSPHORYLASE"/>
    <property type="match status" value="1"/>
</dbReference>
<dbReference type="PANTHER" id="PTHR36540:SF1">
    <property type="entry name" value="PYRIMIDINE_PURINE NUCLEOSIDE PHOSPHORYLASE"/>
    <property type="match status" value="1"/>
</dbReference>
<dbReference type="Pfam" id="PF06865">
    <property type="entry name" value="Ppnp"/>
    <property type="match status" value="1"/>
</dbReference>
<dbReference type="SUPFAM" id="SSF51182">
    <property type="entry name" value="RmlC-like cupins"/>
    <property type="match status" value="1"/>
</dbReference>